<accession>P0DW25</accession>
<sequence>MQTAYWMMVMMMVWITAPLSEGGQLNDVIRGLVPDNLAPQLVLQSLDSRRHPHGIRQDGAQICIWKICPPSPWRRLGS</sequence>
<feature type="signal peptide" evidence="2">
    <location>
        <begin position="1"/>
        <end position="22"/>
    </location>
</feature>
<feature type="propeptide" id="PRO_0000456135" evidence="6">
    <location>
        <begin position="23"/>
        <end position="56"/>
    </location>
</feature>
<feature type="peptide" id="PRO_0000456136" description="Consomatin Te1" evidence="6">
    <location>
        <begin position="57"/>
        <end position="73"/>
    </location>
</feature>
<feature type="propeptide" id="PRO_0000456137" evidence="6">
    <location>
        <begin position="74"/>
        <end position="78"/>
    </location>
</feature>
<feature type="modified residue" description="D-tryptophan" evidence="1">
    <location>
        <position position="65"/>
    </location>
</feature>
<feature type="modified residue" description="4-hydroxyproline" evidence="5">
    <location>
        <position position="69"/>
    </location>
</feature>
<feature type="modified residue" description="4-hydroxyproline" evidence="5">
    <location>
        <position position="70"/>
    </location>
</feature>
<feature type="modified residue" description="4-hydroxyproline" evidence="5">
    <location>
        <position position="72"/>
    </location>
</feature>
<feature type="disulfide bond" evidence="1">
    <location>
        <begin position="63"/>
        <end position="68"/>
    </location>
</feature>
<keyword id="KW-0165">Cleavage on pair of basic residues</keyword>
<keyword id="KW-0208">D-amino acid</keyword>
<keyword id="KW-1015">Disulfide bond</keyword>
<keyword id="KW-1213">G-protein coupled receptor impairing toxin</keyword>
<keyword id="KW-0379">Hydroxylation</keyword>
<keyword id="KW-0964">Secreted</keyword>
<keyword id="KW-0732">Signal</keyword>
<keyword id="KW-0800">Toxin</keyword>
<organism>
    <name type="scientific">Conus terebra</name>
    <name type="common">Sea snail</name>
    <name type="synonym">Virgiconus terebra</name>
    <dbReference type="NCBI Taxonomy" id="89453"/>
    <lineage>
        <taxon>Eukaryota</taxon>
        <taxon>Metazoa</taxon>
        <taxon>Spiralia</taxon>
        <taxon>Lophotrochozoa</taxon>
        <taxon>Mollusca</taxon>
        <taxon>Gastropoda</taxon>
        <taxon>Caenogastropoda</taxon>
        <taxon>Neogastropoda</taxon>
        <taxon>Conoidea</taxon>
        <taxon>Conidae</taxon>
        <taxon>Conus</taxon>
        <taxon>Virgiconus</taxon>
    </lineage>
</organism>
<reference key="1">
    <citation type="journal article" date="2022" name="Mol. Biol. Evol.">
        <title>Reconstructing the origins of the somatostatin and allatostatin-C signaling systems using the accelerated evolution of biodiverse cone snail venoms.</title>
        <authorList>
            <person name="Koch T.L."/>
            <person name="Ramiro I.B.L."/>
            <person name="Florez-Salcedo P."/>
            <person name="Engholm E."/>
            <person name="Jensen K.J."/>
            <person name="Chase K."/>
            <person name="Olivera B.M."/>
            <person name="Bjoern-Yoshimoto W.E."/>
            <person name="Safavi-Hemami H."/>
        </authorList>
    </citation>
    <scope>NUCLEOTIDE SEQUENCE [MRNA]</scope>
    <source>
        <tissue>Venom duct</tissue>
    </source>
</reference>
<dbReference type="GO" id="GO:0005576">
    <property type="term" value="C:extracellular region"/>
    <property type="evidence" value="ECO:0007669"/>
    <property type="project" value="UniProtKB-SubCell"/>
</dbReference>
<dbReference type="GO" id="GO:0090729">
    <property type="term" value="F:toxin activity"/>
    <property type="evidence" value="ECO:0007669"/>
    <property type="project" value="UniProtKB-KW"/>
</dbReference>
<proteinExistence type="inferred from homology"/>
<name>CSST1_CONTC</name>
<comment type="function">
    <text evidence="1">Moderately activates human somatostatin receptors (SSTR) with a preferential activation of SSTR1 and SSTR4. In vivo, does not cause behavioral changes in mice within a few minutes of intracranial injection, but causes a progressive loss of movement thereafter. Four to five hours after injection, mice recover, even with the highest dose tested. Shows antinociception and antihyperalgesia activities in two mouse models of acute pain, most probably by acting outside the central nervous system.</text>
</comment>
<comment type="subcellular location">
    <subcellularLocation>
        <location evidence="6">Secreted</location>
    </subcellularLocation>
</comment>
<comment type="tissue specificity">
    <text evidence="6">Expressed by the venom duct.</text>
</comment>
<comment type="domain">
    <text evidence="5">The cysteine framework is C-C.</text>
</comment>
<comment type="miscellaneous">
    <text evidence="1">This peptide is an evolutionarily optimized stable analog of somatostatin. In addition, it adopts nearly identical conformations as in the somatostatin drug analog Octreotide. As this drug, it contains a D-Trp at the same position, whose synthesis is a common strategy used for enhancing the metabolic stability of compounds in drug design.</text>
</comment>
<comment type="miscellaneous">
    <text evidence="3">Consomatins evolved by gene duplication of a 'Somatostatin and related peptides (SSRP)' gene expressed in the snail neuroendocrine system.</text>
</comment>
<comment type="miscellaneous">
    <text evidence="1">Negative results: does not activate any of the other 313 GPCRs tested. Shows little or no activating activity at the SSTR2, SSTR3 and SSTR5.</text>
</comment>
<comment type="similarity">
    <text evidence="5">Belongs to the conotoxin C superfamily. Consomatin family.</text>
</comment>
<protein>
    <recommendedName>
        <fullName evidence="4">Consomatin Te1</fullName>
        <shortName evidence="5">ConSST Te1</shortName>
    </recommendedName>
    <alternativeName>
        <fullName evidence="4">Somatostatin-related peptide</fullName>
        <shortName evidence="4">SSRP</shortName>
    </alternativeName>
</protein>
<evidence type="ECO:0000250" key="1">
    <source>
        <dbReference type="UniProtKB" id="P0DQT5"/>
    </source>
</evidence>
<evidence type="ECO:0000255" key="2"/>
<evidence type="ECO:0000269" key="3">
    <source>
    </source>
</evidence>
<evidence type="ECO:0000303" key="4">
    <source>
    </source>
</evidence>
<evidence type="ECO:0000305" key="5"/>
<evidence type="ECO:0000305" key="6">
    <source>
    </source>
</evidence>